<gene>
    <name evidence="1" type="primary">xseB</name>
    <name type="ordered locus">LPC_1796</name>
</gene>
<evidence type="ECO:0000255" key="1">
    <source>
        <dbReference type="HAMAP-Rule" id="MF_00337"/>
    </source>
</evidence>
<name>EX7S_LEGPC</name>
<organism>
    <name type="scientific">Legionella pneumophila (strain Corby)</name>
    <dbReference type="NCBI Taxonomy" id="400673"/>
    <lineage>
        <taxon>Bacteria</taxon>
        <taxon>Pseudomonadati</taxon>
        <taxon>Pseudomonadota</taxon>
        <taxon>Gammaproteobacteria</taxon>
        <taxon>Legionellales</taxon>
        <taxon>Legionellaceae</taxon>
        <taxon>Legionella</taxon>
    </lineage>
</organism>
<reference key="1">
    <citation type="submission" date="2006-11" db="EMBL/GenBank/DDBJ databases">
        <title>Identification and characterization of a new conjugation/ type IVA secretion system (trb/tra) of L. pneumophila Corby localized on a mobile genomic island.</title>
        <authorList>
            <person name="Gloeckner G."/>
            <person name="Albert-Weissenberger C."/>
            <person name="Weinmann E."/>
            <person name="Jacobi S."/>
            <person name="Schunder E."/>
            <person name="Steinert M."/>
            <person name="Buchrieser C."/>
            <person name="Hacker J."/>
            <person name="Heuner K."/>
        </authorList>
    </citation>
    <scope>NUCLEOTIDE SEQUENCE [LARGE SCALE GENOMIC DNA]</scope>
    <source>
        <strain>Corby</strain>
    </source>
</reference>
<comment type="function">
    <text evidence="1">Bidirectionally degrades single-stranded DNA into large acid-insoluble oligonucleotides, which are then degraded further into small acid-soluble oligonucleotides.</text>
</comment>
<comment type="catalytic activity">
    <reaction evidence="1">
        <text>Exonucleolytic cleavage in either 5'- to 3'- or 3'- to 5'-direction to yield nucleoside 5'-phosphates.</text>
        <dbReference type="EC" id="3.1.11.6"/>
    </reaction>
</comment>
<comment type="subunit">
    <text evidence="1">Heterooligomer composed of large and small subunits.</text>
</comment>
<comment type="subcellular location">
    <subcellularLocation>
        <location evidence="1">Cytoplasm</location>
    </subcellularLocation>
</comment>
<comment type="similarity">
    <text evidence="1">Belongs to the XseB family.</text>
</comment>
<proteinExistence type="inferred from homology"/>
<protein>
    <recommendedName>
        <fullName evidence="1">Exodeoxyribonuclease 7 small subunit</fullName>
        <ecNumber evidence="1">3.1.11.6</ecNumber>
    </recommendedName>
    <alternativeName>
        <fullName evidence="1">Exodeoxyribonuclease VII small subunit</fullName>
        <shortName evidence="1">Exonuclease VII small subunit</shortName>
    </alternativeName>
</protein>
<keyword id="KW-0963">Cytoplasm</keyword>
<keyword id="KW-0269">Exonuclease</keyword>
<keyword id="KW-0378">Hydrolase</keyword>
<keyword id="KW-0540">Nuclease</keyword>
<accession>A5IEC9</accession>
<sequence>MSKGIHFEQSITELEEIVRQLEKGELTLEESLKQFEKGISLARRCQNALNQAEQKIETLTGTDSNIELDSDEQTSD</sequence>
<feature type="chain" id="PRO_1000019585" description="Exodeoxyribonuclease 7 small subunit">
    <location>
        <begin position="1"/>
        <end position="76"/>
    </location>
</feature>
<dbReference type="EC" id="3.1.11.6" evidence="1"/>
<dbReference type="EMBL" id="CP000675">
    <property type="protein sequence ID" value="ABQ55729.1"/>
    <property type="molecule type" value="Genomic_DNA"/>
</dbReference>
<dbReference type="RefSeq" id="WP_011947173.1">
    <property type="nucleotide sequence ID" value="NC_009494.2"/>
</dbReference>
<dbReference type="SMR" id="A5IEC9"/>
<dbReference type="KEGG" id="lpc:LPC_1796"/>
<dbReference type="HOGENOM" id="CLU_145918_3_2_6"/>
<dbReference type="GO" id="GO:0005829">
    <property type="term" value="C:cytosol"/>
    <property type="evidence" value="ECO:0007669"/>
    <property type="project" value="TreeGrafter"/>
</dbReference>
<dbReference type="GO" id="GO:0009318">
    <property type="term" value="C:exodeoxyribonuclease VII complex"/>
    <property type="evidence" value="ECO:0007669"/>
    <property type="project" value="InterPro"/>
</dbReference>
<dbReference type="GO" id="GO:0008855">
    <property type="term" value="F:exodeoxyribonuclease VII activity"/>
    <property type="evidence" value="ECO:0007669"/>
    <property type="project" value="UniProtKB-UniRule"/>
</dbReference>
<dbReference type="GO" id="GO:0006308">
    <property type="term" value="P:DNA catabolic process"/>
    <property type="evidence" value="ECO:0007669"/>
    <property type="project" value="UniProtKB-UniRule"/>
</dbReference>
<dbReference type="Gene3D" id="1.10.287.1040">
    <property type="entry name" value="Exonuclease VII, small subunit"/>
    <property type="match status" value="1"/>
</dbReference>
<dbReference type="HAMAP" id="MF_00337">
    <property type="entry name" value="Exonuc_7_S"/>
    <property type="match status" value="1"/>
</dbReference>
<dbReference type="InterPro" id="IPR003761">
    <property type="entry name" value="Exonuc_VII_S"/>
</dbReference>
<dbReference type="InterPro" id="IPR037004">
    <property type="entry name" value="Exonuc_VII_ssu_sf"/>
</dbReference>
<dbReference type="NCBIfam" id="NF002139">
    <property type="entry name" value="PRK00977.1-3"/>
    <property type="match status" value="1"/>
</dbReference>
<dbReference type="NCBIfam" id="NF002140">
    <property type="entry name" value="PRK00977.1-4"/>
    <property type="match status" value="1"/>
</dbReference>
<dbReference type="NCBIfam" id="TIGR01280">
    <property type="entry name" value="xseB"/>
    <property type="match status" value="1"/>
</dbReference>
<dbReference type="PANTHER" id="PTHR34137">
    <property type="entry name" value="EXODEOXYRIBONUCLEASE 7 SMALL SUBUNIT"/>
    <property type="match status" value="1"/>
</dbReference>
<dbReference type="PANTHER" id="PTHR34137:SF1">
    <property type="entry name" value="EXODEOXYRIBONUCLEASE 7 SMALL SUBUNIT"/>
    <property type="match status" value="1"/>
</dbReference>
<dbReference type="Pfam" id="PF02609">
    <property type="entry name" value="Exonuc_VII_S"/>
    <property type="match status" value="1"/>
</dbReference>
<dbReference type="PIRSF" id="PIRSF006488">
    <property type="entry name" value="Exonuc_VII_S"/>
    <property type="match status" value="1"/>
</dbReference>
<dbReference type="SUPFAM" id="SSF116842">
    <property type="entry name" value="XseB-like"/>
    <property type="match status" value="1"/>
</dbReference>